<sequence>MFAGLPSLTHEQQQQAVERIQELMSQGMSSGEAIAQVAQEIRATHQGDRIVARFEDDEEE</sequence>
<dbReference type="EMBL" id="CP000783">
    <property type="protein sequence ID" value="ABU76700.1"/>
    <property type="molecule type" value="Genomic_DNA"/>
</dbReference>
<dbReference type="RefSeq" id="WP_012124497.1">
    <property type="nucleotide sequence ID" value="NC_009778.1"/>
</dbReference>
<dbReference type="SMR" id="A7MKF0"/>
<dbReference type="KEGG" id="esa:ESA_01442"/>
<dbReference type="PATRIC" id="fig|290339.8.peg.1276"/>
<dbReference type="HOGENOM" id="CLU_185263_0_0_6"/>
<dbReference type="Proteomes" id="UP000000260">
    <property type="component" value="Chromosome"/>
</dbReference>
<dbReference type="HAMAP" id="MF_00507">
    <property type="entry name" value="UPF0181"/>
    <property type="match status" value="1"/>
</dbReference>
<dbReference type="InterPro" id="IPR005371">
    <property type="entry name" value="UPF0181"/>
</dbReference>
<dbReference type="NCBIfam" id="NF003476">
    <property type="entry name" value="PRK05114.1"/>
    <property type="match status" value="1"/>
</dbReference>
<dbReference type="Pfam" id="PF03701">
    <property type="entry name" value="UPF0181"/>
    <property type="match status" value="1"/>
</dbReference>
<accession>A7MKF0</accession>
<gene>
    <name type="ordered locus">ESA_01442</name>
</gene>
<protein>
    <recommendedName>
        <fullName evidence="1">UPF0181 protein ESA_01442</fullName>
    </recommendedName>
</protein>
<organism>
    <name type="scientific">Cronobacter sakazakii (strain ATCC BAA-894)</name>
    <name type="common">Enterobacter sakazakii</name>
    <dbReference type="NCBI Taxonomy" id="290339"/>
    <lineage>
        <taxon>Bacteria</taxon>
        <taxon>Pseudomonadati</taxon>
        <taxon>Pseudomonadota</taxon>
        <taxon>Gammaproteobacteria</taxon>
        <taxon>Enterobacterales</taxon>
        <taxon>Enterobacteriaceae</taxon>
        <taxon>Cronobacter</taxon>
    </lineage>
</organism>
<comment type="similarity">
    <text evidence="1">Belongs to the UPF0181 family.</text>
</comment>
<proteinExistence type="inferred from homology"/>
<evidence type="ECO:0000255" key="1">
    <source>
        <dbReference type="HAMAP-Rule" id="MF_00507"/>
    </source>
</evidence>
<name>Y1442_CROS8</name>
<reference key="1">
    <citation type="journal article" date="2010" name="PLoS ONE">
        <title>Genome sequence of Cronobacter sakazakii BAA-894 and comparative genomic hybridization analysis with other Cronobacter species.</title>
        <authorList>
            <person name="Kucerova E."/>
            <person name="Clifton S.W."/>
            <person name="Xia X.Q."/>
            <person name="Long F."/>
            <person name="Porwollik S."/>
            <person name="Fulton L."/>
            <person name="Fronick C."/>
            <person name="Minx P."/>
            <person name="Kyung K."/>
            <person name="Warren W."/>
            <person name="Fulton R."/>
            <person name="Feng D."/>
            <person name="Wollam A."/>
            <person name="Shah N."/>
            <person name="Bhonagiri V."/>
            <person name="Nash W.E."/>
            <person name="Hallsworth-Pepin K."/>
            <person name="Wilson R.K."/>
            <person name="McClelland M."/>
            <person name="Forsythe S.J."/>
        </authorList>
    </citation>
    <scope>NUCLEOTIDE SEQUENCE [LARGE SCALE GENOMIC DNA]</scope>
    <source>
        <strain>ATCC BAA-894</strain>
    </source>
</reference>
<keyword id="KW-1185">Reference proteome</keyword>
<feature type="chain" id="PRO_1000014970" description="UPF0181 protein ESA_01442">
    <location>
        <begin position="1"/>
        <end position="60"/>
    </location>
</feature>